<sequence>MEISASLVKQLRDETGAGFMECKKALEETGGDLEKAKLVLKEKGLARAEKKIGRAASQGLIHAYIHGEGKLGVLVEVNCETDFVARTDDFKELVHEIALQIAGMAPEYVAVEDVPEEVIEQEKEIYRKQAENEGKPAEIIDKIVEGKLQNFYKSKVLLEQPYVRDDSKTIKDLIKEKIALLGENIVVRRFVRWTLGE</sequence>
<evidence type="ECO:0000255" key="1">
    <source>
        <dbReference type="HAMAP-Rule" id="MF_00050"/>
    </source>
</evidence>
<gene>
    <name evidence="1" type="primary">tsf</name>
    <name type="ordered locus">COPRO5265_0739</name>
</gene>
<dbReference type="EMBL" id="CP001145">
    <property type="protein sequence ID" value="ACI17943.1"/>
    <property type="molecule type" value="Genomic_DNA"/>
</dbReference>
<dbReference type="RefSeq" id="WP_012544594.1">
    <property type="nucleotide sequence ID" value="NC_011295.1"/>
</dbReference>
<dbReference type="SMR" id="B5Y8J0"/>
<dbReference type="STRING" id="309798.COPRO5265_0739"/>
<dbReference type="KEGG" id="cpo:COPRO5265_0739"/>
<dbReference type="eggNOG" id="COG0264">
    <property type="taxonomic scope" value="Bacteria"/>
</dbReference>
<dbReference type="HOGENOM" id="CLU_047155_1_1_9"/>
<dbReference type="OrthoDB" id="9808348at2"/>
<dbReference type="Proteomes" id="UP000001732">
    <property type="component" value="Chromosome"/>
</dbReference>
<dbReference type="GO" id="GO:0005737">
    <property type="term" value="C:cytoplasm"/>
    <property type="evidence" value="ECO:0007669"/>
    <property type="project" value="UniProtKB-SubCell"/>
</dbReference>
<dbReference type="GO" id="GO:0003746">
    <property type="term" value="F:translation elongation factor activity"/>
    <property type="evidence" value="ECO:0007669"/>
    <property type="project" value="UniProtKB-UniRule"/>
</dbReference>
<dbReference type="CDD" id="cd14275">
    <property type="entry name" value="UBA_EF-Ts"/>
    <property type="match status" value="1"/>
</dbReference>
<dbReference type="FunFam" id="1.10.286.20:FF:000001">
    <property type="entry name" value="Elongation factor Ts"/>
    <property type="match status" value="1"/>
</dbReference>
<dbReference type="FunFam" id="1.10.8.10:FF:000001">
    <property type="entry name" value="Elongation factor Ts"/>
    <property type="match status" value="1"/>
</dbReference>
<dbReference type="Gene3D" id="1.10.286.20">
    <property type="match status" value="1"/>
</dbReference>
<dbReference type="Gene3D" id="1.10.8.10">
    <property type="entry name" value="DNA helicase RuvA subunit, C-terminal domain"/>
    <property type="match status" value="1"/>
</dbReference>
<dbReference type="Gene3D" id="3.30.479.20">
    <property type="entry name" value="Elongation factor Ts, dimerisation domain"/>
    <property type="match status" value="1"/>
</dbReference>
<dbReference type="HAMAP" id="MF_00050">
    <property type="entry name" value="EF_Ts"/>
    <property type="match status" value="1"/>
</dbReference>
<dbReference type="InterPro" id="IPR036402">
    <property type="entry name" value="EF-Ts_dimer_sf"/>
</dbReference>
<dbReference type="InterPro" id="IPR001816">
    <property type="entry name" value="Transl_elong_EFTs/EF1B"/>
</dbReference>
<dbReference type="InterPro" id="IPR014039">
    <property type="entry name" value="Transl_elong_EFTs/EF1B_dimer"/>
</dbReference>
<dbReference type="InterPro" id="IPR018101">
    <property type="entry name" value="Transl_elong_Ts_CS"/>
</dbReference>
<dbReference type="InterPro" id="IPR009060">
    <property type="entry name" value="UBA-like_sf"/>
</dbReference>
<dbReference type="NCBIfam" id="TIGR00116">
    <property type="entry name" value="tsf"/>
    <property type="match status" value="1"/>
</dbReference>
<dbReference type="PANTHER" id="PTHR11741">
    <property type="entry name" value="ELONGATION FACTOR TS"/>
    <property type="match status" value="1"/>
</dbReference>
<dbReference type="PANTHER" id="PTHR11741:SF0">
    <property type="entry name" value="ELONGATION FACTOR TS, MITOCHONDRIAL"/>
    <property type="match status" value="1"/>
</dbReference>
<dbReference type="Pfam" id="PF00889">
    <property type="entry name" value="EF_TS"/>
    <property type="match status" value="1"/>
</dbReference>
<dbReference type="SUPFAM" id="SSF54713">
    <property type="entry name" value="Elongation factor Ts (EF-Ts), dimerisation domain"/>
    <property type="match status" value="1"/>
</dbReference>
<dbReference type="SUPFAM" id="SSF46934">
    <property type="entry name" value="UBA-like"/>
    <property type="match status" value="1"/>
</dbReference>
<dbReference type="PROSITE" id="PS01126">
    <property type="entry name" value="EF_TS_1"/>
    <property type="match status" value="1"/>
</dbReference>
<dbReference type="PROSITE" id="PS01127">
    <property type="entry name" value="EF_TS_2"/>
    <property type="match status" value="1"/>
</dbReference>
<comment type="function">
    <text evidence="1">Associates with the EF-Tu.GDP complex and induces the exchange of GDP to GTP. It remains bound to the aminoacyl-tRNA.EF-Tu.GTP complex up to the GTP hydrolysis stage on the ribosome.</text>
</comment>
<comment type="subcellular location">
    <subcellularLocation>
        <location evidence="1">Cytoplasm</location>
    </subcellularLocation>
</comment>
<comment type="similarity">
    <text evidence="1">Belongs to the EF-Ts family.</text>
</comment>
<protein>
    <recommendedName>
        <fullName evidence="1">Elongation factor Ts</fullName>
        <shortName evidence="1">EF-Ts</shortName>
    </recommendedName>
</protein>
<accession>B5Y8J0</accession>
<proteinExistence type="inferred from homology"/>
<feature type="chain" id="PRO_1000189871" description="Elongation factor Ts">
    <location>
        <begin position="1"/>
        <end position="197"/>
    </location>
</feature>
<feature type="region of interest" description="Involved in Mg(2+) ion dislocation from EF-Tu" evidence="1">
    <location>
        <begin position="81"/>
        <end position="84"/>
    </location>
</feature>
<keyword id="KW-0963">Cytoplasm</keyword>
<keyword id="KW-0251">Elongation factor</keyword>
<keyword id="KW-0648">Protein biosynthesis</keyword>
<keyword id="KW-1185">Reference proteome</keyword>
<organism>
    <name type="scientific">Coprothermobacter proteolyticus (strain ATCC 35245 / DSM 5265 / OCM 4 / BT)</name>
    <dbReference type="NCBI Taxonomy" id="309798"/>
    <lineage>
        <taxon>Bacteria</taxon>
        <taxon>Pseudomonadati</taxon>
        <taxon>Coprothermobacterota</taxon>
        <taxon>Coprothermobacteria</taxon>
        <taxon>Coprothermobacterales</taxon>
        <taxon>Coprothermobacteraceae</taxon>
        <taxon>Coprothermobacter</taxon>
    </lineage>
</organism>
<reference key="1">
    <citation type="submission" date="2008-08" db="EMBL/GenBank/DDBJ databases">
        <title>The complete genome sequence of Coprothermobacter proteolyticus strain ATCC 5245 / DSM 5265 / BT.</title>
        <authorList>
            <person name="Dodson R.J."/>
            <person name="Durkin A.S."/>
            <person name="Wu M."/>
            <person name="Eisen J."/>
            <person name="Sutton G."/>
        </authorList>
    </citation>
    <scope>NUCLEOTIDE SEQUENCE [LARGE SCALE GENOMIC DNA]</scope>
    <source>
        <strain>ATCC 35245 / DSM 5265 / OCM 4 / BT</strain>
    </source>
</reference>
<name>EFTS_COPPD</name>